<comment type="function">
    <text evidence="1">Catalyzes the GTP-dependent ribosomal translocation step during translation elongation. During this step, the ribosome changes from the pre-translocational (PRE) to the post-translocational (POST) state as the newly formed A-site-bound peptidyl-tRNA and P-site-bound deacylated tRNA move to the P and E sites, respectively. Catalyzes the coordinated movement of the two tRNA molecules, the mRNA and conformational changes in the ribosome.</text>
</comment>
<comment type="subcellular location">
    <subcellularLocation>
        <location evidence="1">Cytoplasm</location>
    </subcellularLocation>
</comment>
<comment type="similarity">
    <text evidence="1">Belongs to the TRAFAC class translation factor GTPase superfamily. Classic translation factor GTPase family. EF-G/EF-2 subfamily.</text>
</comment>
<sequence>MATAREIPLDRTRNIGIMAHIDAGKTTTTERVLYYTGVSHKMGEVHEGSAVMDWMEQEQERGITITSAATTCYWLGMDQQYPKHRINIIDTPGHVDFTIEVERSLRVLDGAVAVFCSVGGVEPQSETVWRQANRYHVPRLGFVNKMDRAGANFLRVVNQVKDRLNANPIPIQLPIGAEEDFKGVIDLIREKAIYWNEADRGRTYELADIPEDMKVEVQKWREKMIEAAAESSEELMDKYLEAGDLSPEQIRQGLRQRTLANEIVPILCGSAFKNKGVQALLDAVIDYLPSPTDVPAIRGEEDDGSEGSRSASDDEPFAALAFKIASDPFVGTLTFFRVYSGILKSGDSVYNPIKGKKERIGRLLQMHSNSREEIKEVRAGDIAAAVGLKTVTTGDTICNQQNIITLEKMDFPEPVISVAIEPKTKADQEKMGVALGKLAQEDPSFRVHTDEESAQTIIEGMGELHLEIIVDRMRREFNVEANVGKPRVAYRETIRRSVEQQGKYIRQTGGRGQYGDVWLRIEPREPGAGFEFENAIVGGVVPREYIPAVEKGVREQMENGIRAGYPVVDVKVTIFEGSYHDVDSSEMAFKIAGSMAFKEGASKADPVLLEPIMKVEVVTPEEYMGDVVGDLNRRRGMIQGMDESPAGKIVDVEVPLAEMFGYATDLRSLSQGRATYTMEFLKYAEAPSNIAEAIIKQQS</sequence>
<protein>
    <recommendedName>
        <fullName evidence="1">Elongation factor G</fullName>
        <shortName evidence="1">EF-G</shortName>
    </recommendedName>
</protein>
<accession>A9KD34</accession>
<dbReference type="EMBL" id="CP000733">
    <property type="protein sequence ID" value="ABS77212.1"/>
    <property type="molecule type" value="Genomic_DNA"/>
</dbReference>
<dbReference type="RefSeq" id="WP_011997292.1">
    <property type="nucleotide sequence ID" value="NC_009727.1"/>
</dbReference>
<dbReference type="SMR" id="A9KD34"/>
<dbReference type="KEGG" id="cbd:CBUD_1857"/>
<dbReference type="HOGENOM" id="CLU_002794_4_1_6"/>
<dbReference type="Proteomes" id="UP000008555">
    <property type="component" value="Chromosome"/>
</dbReference>
<dbReference type="GO" id="GO:0005737">
    <property type="term" value="C:cytoplasm"/>
    <property type="evidence" value="ECO:0007669"/>
    <property type="project" value="UniProtKB-SubCell"/>
</dbReference>
<dbReference type="GO" id="GO:0005525">
    <property type="term" value="F:GTP binding"/>
    <property type="evidence" value="ECO:0007669"/>
    <property type="project" value="UniProtKB-UniRule"/>
</dbReference>
<dbReference type="GO" id="GO:0003924">
    <property type="term" value="F:GTPase activity"/>
    <property type="evidence" value="ECO:0007669"/>
    <property type="project" value="InterPro"/>
</dbReference>
<dbReference type="GO" id="GO:0097216">
    <property type="term" value="F:guanosine tetraphosphate binding"/>
    <property type="evidence" value="ECO:0007669"/>
    <property type="project" value="UniProtKB-ARBA"/>
</dbReference>
<dbReference type="GO" id="GO:0003746">
    <property type="term" value="F:translation elongation factor activity"/>
    <property type="evidence" value="ECO:0007669"/>
    <property type="project" value="UniProtKB-UniRule"/>
</dbReference>
<dbReference type="GO" id="GO:0032790">
    <property type="term" value="P:ribosome disassembly"/>
    <property type="evidence" value="ECO:0007669"/>
    <property type="project" value="TreeGrafter"/>
</dbReference>
<dbReference type="CDD" id="cd01886">
    <property type="entry name" value="EF-G"/>
    <property type="match status" value="1"/>
</dbReference>
<dbReference type="CDD" id="cd16262">
    <property type="entry name" value="EFG_III"/>
    <property type="match status" value="1"/>
</dbReference>
<dbReference type="CDD" id="cd01434">
    <property type="entry name" value="EFG_mtEFG1_IV"/>
    <property type="match status" value="1"/>
</dbReference>
<dbReference type="CDD" id="cd03713">
    <property type="entry name" value="EFG_mtEFG_C"/>
    <property type="match status" value="1"/>
</dbReference>
<dbReference type="CDD" id="cd04088">
    <property type="entry name" value="EFG_mtEFG_II"/>
    <property type="match status" value="1"/>
</dbReference>
<dbReference type="FunFam" id="2.40.30.10:FF:000006">
    <property type="entry name" value="Elongation factor G"/>
    <property type="match status" value="1"/>
</dbReference>
<dbReference type="FunFam" id="3.30.230.10:FF:000003">
    <property type="entry name" value="Elongation factor G"/>
    <property type="match status" value="1"/>
</dbReference>
<dbReference type="FunFam" id="3.30.70.240:FF:000001">
    <property type="entry name" value="Elongation factor G"/>
    <property type="match status" value="1"/>
</dbReference>
<dbReference type="FunFam" id="3.30.70.870:FF:000001">
    <property type="entry name" value="Elongation factor G"/>
    <property type="match status" value="1"/>
</dbReference>
<dbReference type="FunFam" id="3.40.50.300:FF:000029">
    <property type="entry name" value="Elongation factor G"/>
    <property type="match status" value="1"/>
</dbReference>
<dbReference type="Gene3D" id="3.30.230.10">
    <property type="match status" value="1"/>
</dbReference>
<dbReference type="Gene3D" id="3.30.70.240">
    <property type="match status" value="1"/>
</dbReference>
<dbReference type="Gene3D" id="3.30.70.870">
    <property type="entry name" value="Elongation Factor G (Translational Gtpase), domain 3"/>
    <property type="match status" value="1"/>
</dbReference>
<dbReference type="Gene3D" id="3.40.50.300">
    <property type="entry name" value="P-loop containing nucleotide triphosphate hydrolases"/>
    <property type="match status" value="1"/>
</dbReference>
<dbReference type="Gene3D" id="2.40.30.10">
    <property type="entry name" value="Translation factors"/>
    <property type="match status" value="1"/>
</dbReference>
<dbReference type="HAMAP" id="MF_00054_B">
    <property type="entry name" value="EF_G_EF_2_B"/>
    <property type="match status" value="1"/>
</dbReference>
<dbReference type="InterPro" id="IPR041095">
    <property type="entry name" value="EFG_II"/>
</dbReference>
<dbReference type="InterPro" id="IPR009022">
    <property type="entry name" value="EFG_III"/>
</dbReference>
<dbReference type="InterPro" id="IPR035647">
    <property type="entry name" value="EFG_III/V"/>
</dbReference>
<dbReference type="InterPro" id="IPR047872">
    <property type="entry name" value="EFG_IV"/>
</dbReference>
<dbReference type="InterPro" id="IPR035649">
    <property type="entry name" value="EFG_V"/>
</dbReference>
<dbReference type="InterPro" id="IPR000640">
    <property type="entry name" value="EFG_V-like"/>
</dbReference>
<dbReference type="InterPro" id="IPR004161">
    <property type="entry name" value="EFTu-like_2"/>
</dbReference>
<dbReference type="InterPro" id="IPR031157">
    <property type="entry name" value="G_TR_CS"/>
</dbReference>
<dbReference type="InterPro" id="IPR027417">
    <property type="entry name" value="P-loop_NTPase"/>
</dbReference>
<dbReference type="InterPro" id="IPR020568">
    <property type="entry name" value="Ribosomal_Su5_D2-typ_SF"/>
</dbReference>
<dbReference type="InterPro" id="IPR014721">
    <property type="entry name" value="Ribsml_uS5_D2-typ_fold_subgr"/>
</dbReference>
<dbReference type="InterPro" id="IPR005225">
    <property type="entry name" value="Small_GTP-bd"/>
</dbReference>
<dbReference type="InterPro" id="IPR000795">
    <property type="entry name" value="T_Tr_GTP-bd_dom"/>
</dbReference>
<dbReference type="InterPro" id="IPR009000">
    <property type="entry name" value="Transl_B-barrel_sf"/>
</dbReference>
<dbReference type="InterPro" id="IPR004540">
    <property type="entry name" value="Transl_elong_EFG/EF2"/>
</dbReference>
<dbReference type="InterPro" id="IPR005517">
    <property type="entry name" value="Transl_elong_EFG/EF2_IV"/>
</dbReference>
<dbReference type="NCBIfam" id="TIGR00484">
    <property type="entry name" value="EF-G"/>
    <property type="match status" value="1"/>
</dbReference>
<dbReference type="NCBIfam" id="NF009379">
    <property type="entry name" value="PRK12740.1-3"/>
    <property type="match status" value="1"/>
</dbReference>
<dbReference type="NCBIfam" id="NF009381">
    <property type="entry name" value="PRK12740.1-5"/>
    <property type="match status" value="1"/>
</dbReference>
<dbReference type="NCBIfam" id="TIGR00231">
    <property type="entry name" value="small_GTP"/>
    <property type="match status" value="1"/>
</dbReference>
<dbReference type="PANTHER" id="PTHR43261:SF1">
    <property type="entry name" value="RIBOSOME-RELEASING FACTOR 2, MITOCHONDRIAL"/>
    <property type="match status" value="1"/>
</dbReference>
<dbReference type="PANTHER" id="PTHR43261">
    <property type="entry name" value="TRANSLATION ELONGATION FACTOR G-RELATED"/>
    <property type="match status" value="1"/>
</dbReference>
<dbReference type="Pfam" id="PF00679">
    <property type="entry name" value="EFG_C"/>
    <property type="match status" value="1"/>
</dbReference>
<dbReference type="Pfam" id="PF14492">
    <property type="entry name" value="EFG_III"/>
    <property type="match status" value="1"/>
</dbReference>
<dbReference type="Pfam" id="PF03764">
    <property type="entry name" value="EFG_IV"/>
    <property type="match status" value="1"/>
</dbReference>
<dbReference type="Pfam" id="PF00009">
    <property type="entry name" value="GTP_EFTU"/>
    <property type="match status" value="1"/>
</dbReference>
<dbReference type="Pfam" id="PF03144">
    <property type="entry name" value="GTP_EFTU_D2"/>
    <property type="match status" value="1"/>
</dbReference>
<dbReference type="PRINTS" id="PR00315">
    <property type="entry name" value="ELONGATNFCT"/>
</dbReference>
<dbReference type="SMART" id="SM00838">
    <property type="entry name" value="EFG_C"/>
    <property type="match status" value="1"/>
</dbReference>
<dbReference type="SMART" id="SM00889">
    <property type="entry name" value="EFG_IV"/>
    <property type="match status" value="1"/>
</dbReference>
<dbReference type="SUPFAM" id="SSF54980">
    <property type="entry name" value="EF-G C-terminal domain-like"/>
    <property type="match status" value="2"/>
</dbReference>
<dbReference type="SUPFAM" id="SSF52540">
    <property type="entry name" value="P-loop containing nucleoside triphosphate hydrolases"/>
    <property type="match status" value="1"/>
</dbReference>
<dbReference type="SUPFAM" id="SSF54211">
    <property type="entry name" value="Ribosomal protein S5 domain 2-like"/>
    <property type="match status" value="1"/>
</dbReference>
<dbReference type="SUPFAM" id="SSF50447">
    <property type="entry name" value="Translation proteins"/>
    <property type="match status" value="1"/>
</dbReference>
<dbReference type="PROSITE" id="PS00301">
    <property type="entry name" value="G_TR_1"/>
    <property type="match status" value="1"/>
</dbReference>
<dbReference type="PROSITE" id="PS51722">
    <property type="entry name" value="G_TR_2"/>
    <property type="match status" value="1"/>
</dbReference>
<keyword id="KW-0963">Cytoplasm</keyword>
<keyword id="KW-0251">Elongation factor</keyword>
<keyword id="KW-0342">GTP-binding</keyword>
<keyword id="KW-0547">Nucleotide-binding</keyword>
<keyword id="KW-0648">Protein biosynthesis</keyword>
<organism>
    <name type="scientific">Coxiella burnetii (strain Dugway 5J108-111)</name>
    <dbReference type="NCBI Taxonomy" id="434922"/>
    <lineage>
        <taxon>Bacteria</taxon>
        <taxon>Pseudomonadati</taxon>
        <taxon>Pseudomonadota</taxon>
        <taxon>Gammaproteobacteria</taxon>
        <taxon>Legionellales</taxon>
        <taxon>Coxiellaceae</taxon>
        <taxon>Coxiella</taxon>
    </lineage>
</organism>
<gene>
    <name evidence="1" type="primary">fusA</name>
    <name type="ordered locus">CBUD_1857</name>
</gene>
<name>EFG_COXBN</name>
<evidence type="ECO:0000255" key="1">
    <source>
        <dbReference type="HAMAP-Rule" id="MF_00054"/>
    </source>
</evidence>
<proteinExistence type="inferred from homology"/>
<reference key="1">
    <citation type="journal article" date="2009" name="Infect. Immun.">
        <title>Comparative genomics reveal extensive transposon-mediated genomic plasticity and diversity among potential effector proteins within the genus Coxiella.</title>
        <authorList>
            <person name="Beare P.A."/>
            <person name="Unsworth N."/>
            <person name="Andoh M."/>
            <person name="Voth D.E."/>
            <person name="Omsland A."/>
            <person name="Gilk S.D."/>
            <person name="Williams K.P."/>
            <person name="Sobral B.W."/>
            <person name="Kupko J.J. III"/>
            <person name="Porcella S.F."/>
            <person name="Samuel J.E."/>
            <person name="Heinzen R.A."/>
        </authorList>
    </citation>
    <scope>NUCLEOTIDE SEQUENCE [LARGE SCALE GENOMIC DNA]</scope>
    <source>
        <strain>Dugway 5J108-111</strain>
    </source>
</reference>
<feature type="chain" id="PRO_1000074954" description="Elongation factor G">
    <location>
        <begin position="1"/>
        <end position="699"/>
    </location>
</feature>
<feature type="domain" description="tr-type G">
    <location>
        <begin position="10"/>
        <end position="292"/>
    </location>
</feature>
<feature type="binding site" evidence="1">
    <location>
        <begin position="19"/>
        <end position="26"/>
    </location>
    <ligand>
        <name>GTP</name>
        <dbReference type="ChEBI" id="CHEBI:37565"/>
    </ligand>
</feature>
<feature type="binding site" evidence="1">
    <location>
        <begin position="90"/>
        <end position="94"/>
    </location>
    <ligand>
        <name>GTP</name>
        <dbReference type="ChEBI" id="CHEBI:37565"/>
    </ligand>
</feature>
<feature type="binding site" evidence="1">
    <location>
        <begin position="144"/>
        <end position="147"/>
    </location>
    <ligand>
        <name>GTP</name>
        <dbReference type="ChEBI" id="CHEBI:37565"/>
    </ligand>
</feature>